<organism evidence="7">
    <name type="scientific">Caenorhabditis elegans</name>
    <dbReference type="NCBI Taxonomy" id="6239"/>
    <lineage>
        <taxon>Eukaryota</taxon>
        <taxon>Metazoa</taxon>
        <taxon>Ecdysozoa</taxon>
        <taxon>Nematoda</taxon>
        <taxon>Chromadorea</taxon>
        <taxon>Rhabditida</taxon>
        <taxon>Rhabditina</taxon>
        <taxon>Rhabditomorpha</taxon>
        <taxon>Rhabditoidea</taxon>
        <taxon>Rhabditidae</taxon>
        <taxon>Peloderinae</taxon>
        <taxon>Caenorhabditis</taxon>
    </lineage>
</organism>
<comment type="function">
    <text evidence="3">Involved in the regulation of the larval diapause.</text>
</comment>
<comment type="subcellular location">
    <subcellularLocation>
        <location evidence="5">Secreted</location>
    </subcellularLocation>
</comment>
<comment type="tissue specificity">
    <text evidence="3">Expressed in head neurons and the uterus.</text>
</comment>
<comment type="developmental stage">
    <text evidence="2 3">Expressed during larval and adult stages with the highest expression during the L2 stage of larval development (PubMed:14730154). Expressed in head neurons at pre-dauer, dauer and post-dauer larval stages (PubMed:23132577). During the dauer stage, also expressed in tail neurons, amphid neurons, the ventral nerve cord and AVG interneurons (PubMed:23132577).</text>
</comment>
<comment type="disruption phenotype">
    <text evidence="3">33% reduction in the larval diapause in the presence of dauer pheromone compared to wild-type.</text>
</comment>
<comment type="similarity">
    <text evidence="1">Belongs to the insulin family.</text>
</comment>
<proteinExistence type="evidence at transcript level"/>
<gene>
    <name evidence="8" type="primary">ins-17</name>
    <name evidence="4" type="synonym">ins-2</name>
    <name evidence="8" type="ORF">F56F3.6</name>
</gene>
<keyword id="KW-1185">Reference proteome</keyword>
<keyword id="KW-0964">Secreted</keyword>
<keyword id="KW-0732">Signal</keyword>
<protein>
    <recommendedName>
        <fullName evidence="6">Insulin-like peptide 17</fullName>
    </recommendedName>
</protein>
<reference key="1">
    <citation type="journal article" date="2003" name="Biosci. Biotechnol. Biochem.">
        <title>Cloning and characterization of a Caenorhabditis elegans cDNA encoding a new insulin/IGF-like peptide.</title>
        <authorList>
            <person name="Kawano T."/>
            <person name="Takuwa K."/>
            <person name="Ishiguro M."/>
            <person name="Nakajima T."/>
            <person name="Kimura Y."/>
        </authorList>
    </citation>
    <scope>NUCLEOTIDE SEQUENCE [MRNA]</scope>
    <scope>DEVELOPMENTAL STAGE</scope>
</reference>
<reference key="2">
    <citation type="journal article" date="1998" name="Science">
        <title>Genome sequence of the nematode C. elegans: a platform for investigating biology.</title>
        <authorList>
            <consortium name="The C. elegans sequencing consortium"/>
        </authorList>
    </citation>
    <scope>NUCLEOTIDE SEQUENCE [LARGE SCALE GENOMIC DNA]</scope>
    <source>
        <strain evidence="7">Bristol N2</strain>
    </source>
</reference>
<reference key="3">
    <citation type="journal article" date="2012" name="Biosci. Biotechnol. Biochem.">
        <title>A Caenorhabditis elegans insulin-like peptide, INS-17: its physiological function and expression pattern.</title>
        <authorList>
            <person name="Matsunaga Y."/>
            <person name="Nakajima K."/>
            <person name="Gengyo-Ando K."/>
            <person name="Mitani S."/>
            <person name="Iwasaki T."/>
            <person name="Kawano T."/>
        </authorList>
    </citation>
    <scope>FUNCTION</scope>
    <scope>TISSUE SPECIFICITY</scope>
    <scope>DEVELOPMENTAL STAGE</scope>
    <scope>DISRUPTION PHENOTYPE</scope>
</reference>
<accession>G5EFH1</accession>
<name>INS17_CAEEL</name>
<dbReference type="EMBL" id="AB009658">
    <property type="protein sequence ID" value="BAA82662.1"/>
    <property type="molecule type" value="mRNA"/>
</dbReference>
<dbReference type="EMBL" id="BX284603">
    <property type="protein sequence ID" value="CAA83603.1"/>
    <property type="molecule type" value="Genomic_DNA"/>
</dbReference>
<dbReference type="PIR" id="S43582">
    <property type="entry name" value="S43582"/>
</dbReference>
<dbReference type="RefSeq" id="NP_497911.1">
    <property type="nucleotide sequence ID" value="NM_065510.8"/>
</dbReference>
<dbReference type="FunCoup" id="G5EFH1">
    <property type="interactions" value="47"/>
</dbReference>
<dbReference type="IntAct" id="G5EFH1">
    <property type="interactions" value="1"/>
</dbReference>
<dbReference type="STRING" id="6239.F56F3.6.3"/>
<dbReference type="PaxDb" id="6239-F56F3.6"/>
<dbReference type="PeptideAtlas" id="G5EFH1"/>
<dbReference type="EnsemblMetazoa" id="F56F3.6.1">
    <property type="protein sequence ID" value="F56F3.6.1"/>
    <property type="gene ID" value="WBGene00002100"/>
</dbReference>
<dbReference type="GeneID" id="175585"/>
<dbReference type="KEGG" id="cel:CELE_F56F3.6"/>
<dbReference type="AGR" id="WB:WBGene00002100"/>
<dbReference type="CTD" id="175585"/>
<dbReference type="WormBase" id="F56F3.6">
    <property type="protein sequence ID" value="CE00681"/>
    <property type="gene ID" value="WBGene00002100"/>
    <property type="gene designation" value="ins-17"/>
</dbReference>
<dbReference type="eggNOG" id="ENOG502THVF">
    <property type="taxonomic scope" value="Eukaryota"/>
</dbReference>
<dbReference type="HOGENOM" id="CLU_2252501_0_0_1"/>
<dbReference type="InParanoid" id="G5EFH1"/>
<dbReference type="OMA" id="IFAICNP"/>
<dbReference type="OrthoDB" id="5784897at2759"/>
<dbReference type="PRO" id="PR:G5EFH1"/>
<dbReference type="Proteomes" id="UP000001940">
    <property type="component" value="Chromosome III"/>
</dbReference>
<dbReference type="Bgee" id="WBGene00002100">
    <property type="expression patterns" value="Expressed in larva and 3 other cell types or tissues"/>
</dbReference>
<dbReference type="GO" id="GO:0005576">
    <property type="term" value="C:extracellular region"/>
    <property type="evidence" value="ECO:0007669"/>
    <property type="project" value="UniProtKB-SubCell"/>
</dbReference>
<dbReference type="GO" id="GO:0040024">
    <property type="term" value="P:dauer larval development"/>
    <property type="evidence" value="ECO:0000316"/>
    <property type="project" value="UniProtKB"/>
</dbReference>
<dbReference type="InterPro" id="IPR036438">
    <property type="entry name" value="Insulin-like_sf"/>
</dbReference>
<dbReference type="InterPro" id="IPR022353">
    <property type="entry name" value="Insulin_CS"/>
</dbReference>
<dbReference type="SUPFAM" id="SSF56994">
    <property type="entry name" value="Insulin-like"/>
    <property type="match status" value="1"/>
</dbReference>
<dbReference type="PROSITE" id="PS00262">
    <property type="entry name" value="INSULIN"/>
    <property type="match status" value="1"/>
</dbReference>
<sequence length="108" mass="11732">MFSTRGVLLLLSLMAAVAAFGLFSRPAPITRDTIRPPRAKHGSLKLCPPGGASFLDAFNLICPMRRRRRSVSENYNDGGGSLLGRTMNMCCETGCEFTDIFAICNPFG</sequence>
<feature type="signal peptide" evidence="1">
    <location>
        <begin position="1"/>
        <end position="19"/>
    </location>
</feature>
<feature type="chain" id="PRO_5007661282" description="Insulin-like peptide 17">
    <location>
        <begin position="20"/>
        <end position="108"/>
    </location>
</feature>
<evidence type="ECO:0000255" key="1"/>
<evidence type="ECO:0000269" key="2">
    <source>
    </source>
</evidence>
<evidence type="ECO:0000269" key="3">
    <source>
    </source>
</evidence>
<evidence type="ECO:0000303" key="4">
    <source>
    </source>
</evidence>
<evidence type="ECO:0000305" key="5"/>
<evidence type="ECO:0000305" key="6">
    <source>
    </source>
</evidence>
<evidence type="ECO:0000312" key="7">
    <source>
        <dbReference type="Proteomes" id="UP000001940"/>
    </source>
</evidence>
<evidence type="ECO:0000312" key="8">
    <source>
        <dbReference type="WormBase" id="F56F3.6"/>
    </source>
</evidence>